<proteinExistence type="inferred from homology"/>
<accession>B5BFV0</accession>
<gene>
    <name evidence="1" type="primary">uxaC</name>
    <name type="ordered locus">SSPA2803</name>
</gene>
<protein>
    <recommendedName>
        <fullName evidence="1">Uronate isomerase</fullName>
        <ecNumber evidence="1">5.3.1.12</ecNumber>
    </recommendedName>
    <alternativeName>
        <fullName evidence="1">Glucuronate isomerase</fullName>
    </alternativeName>
    <alternativeName>
        <fullName evidence="1">Uronic isomerase</fullName>
    </alternativeName>
</protein>
<reference key="1">
    <citation type="journal article" date="2009" name="BMC Genomics">
        <title>Pseudogene accumulation in the evolutionary histories of Salmonella enterica serovars Paratyphi A and Typhi.</title>
        <authorList>
            <person name="Holt K.E."/>
            <person name="Thomson N.R."/>
            <person name="Wain J."/>
            <person name="Langridge G.C."/>
            <person name="Hasan R."/>
            <person name="Bhutta Z.A."/>
            <person name="Quail M.A."/>
            <person name="Norbertczak H."/>
            <person name="Walker D."/>
            <person name="Simmonds M."/>
            <person name="White B."/>
            <person name="Bason N."/>
            <person name="Mungall K."/>
            <person name="Dougan G."/>
            <person name="Parkhill J."/>
        </authorList>
    </citation>
    <scope>NUCLEOTIDE SEQUENCE [LARGE SCALE GENOMIC DNA]</scope>
    <source>
        <strain>AKU_12601</strain>
    </source>
</reference>
<feature type="chain" id="PRO_1000131606" description="Uronate isomerase">
    <location>
        <begin position="1"/>
        <end position="470"/>
    </location>
</feature>
<organism>
    <name type="scientific">Salmonella paratyphi A (strain AKU_12601)</name>
    <dbReference type="NCBI Taxonomy" id="554290"/>
    <lineage>
        <taxon>Bacteria</taxon>
        <taxon>Pseudomonadati</taxon>
        <taxon>Pseudomonadota</taxon>
        <taxon>Gammaproteobacteria</taxon>
        <taxon>Enterobacterales</taxon>
        <taxon>Enterobacteriaceae</taxon>
        <taxon>Salmonella</taxon>
    </lineage>
</organism>
<sequence length="470" mass="53540">MATFMTEDFLLKNDIARTLYHKYAAPMPIYDFHCHLSPQEIADDRRFDNLGQIWLEGDHYKWRALRSAGVDESLITGKETSDYEKYMAWANTVPKTLGNPLYHWTHLELRRPFGITSTLFGPDTAESIWTQCNEKLATPAFSARGIMQQMNVRMVGTTDDPIDSLEYHRQIAADDSINIEVAPSWRPDKVFKIELDGFVDYLGKLEAAADVSITRFDDLRQALTRRLDHFAACGCRASDHGIETLRFAPVPDDAQLDAILGKRLAGETLSELEIAQFTTAVLVWLGRQYAARGWVMQLHIGAIRNNNTRMFRLLGPDTGFDSIGDNNISWALSRLLDSMDVTNELPKTILYCLNPRDNEVLATMIGNFQGPGIAGKVQFGSGWWFNDQKDGMLRQLEQLSQMGLLSQFVGMLTDSRSFLSYTRHEYFRRILCNLLGQWAQDGEIPDDEAMLSRMVQDICFNNAQRYFTIK</sequence>
<evidence type="ECO:0000255" key="1">
    <source>
        <dbReference type="HAMAP-Rule" id="MF_00675"/>
    </source>
</evidence>
<dbReference type="EC" id="5.3.1.12" evidence="1"/>
<dbReference type="EMBL" id="FM200053">
    <property type="protein sequence ID" value="CAR61048.1"/>
    <property type="molecule type" value="Genomic_DNA"/>
</dbReference>
<dbReference type="RefSeq" id="WP_000190186.1">
    <property type="nucleotide sequence ID" value="NC_011147.1"/>
</dbReference>
<dbReference type="SMR" id="B5BFV0"/>
<dbReference type="KEGG" id="sek:SSPA2803"/>
<dbReference type="HOGENOM" id="CLU_044465_1_0_6"/>
<dbReference type="UniPathway" id="UPA00246"/>
<dbReference type="Proteomes" id="UP000001869">
    <property type="component" value="Chromosome"/>
</dbReference>
<dbReference type="GO" id="GO:0008880">
    <property type="term" value="F:glucuronate isomerase activity"/>
    <property type="evidence" value="ECO:0007669"/>
    <property type="project" value="UniProtKB-UniRule"/>
</dbReference>
<dbReference type="GO" id="GO:0019698">
    <property type="term" value="P:D-galacturonate catabolic process"/>
    <property type="evidence" value="ECO:0007669"/>
    <property type="project" value="TreeGrafter"/>
</dbReference>
<dbReference type="GO" id="GO:0042840">
    <property type="term" value="P:D-glucuronate catabolic process"/>
    <property type="evidence" value="ECO:0007669"/>
    <property type="project" value="TreeGrafter"/>
</dbReference>
<dbReference type="Gene3D" id="3.20.20.140">
    <property type="entry name" value="Metal-dependent hydrolases"/>
    <property type="match status" value="1"/>
</dbReference>
<dbReference type="Gene3D" id="1.10.2020.10">
    <property type="entry name" value="uronate isomerase, domain 2, chain A"/>
    <property type="match status" value="1"/>
</dbReference>
<dbReference type="HAMAP" id="MF_00675">
    <property type="entry name" value="UxaC"/>
    <property type="match status" value="1"/>
</dbReference>
<dbReference type="InterPro" id="IPR032466">
    <property type="entry name" value="Metal_Hydrolase"/>
</dbReference>
<dbReference type="InterPro" id="IPR003766">
    <property type="entry name" value="Uronate_isomerase"/>
</dbReference>
<dbReference type="NCBIfam" id="NF002794">
    <property type="entry name" value="PRK02925.1"/>
    <property type="match status" value="1"/>
</dbReference>
<dbReference type="PANTHER" id="PTHR30068">
    <property type="entry name" value="URONATE ISOMERASE"/>
    <property type="match status" value="1"/>
</dbReference>
<dbReference type="PANTHER" id="PTHR30068:SF4">
    <property type="entry name" value="URONATE ISOMERASE"/>
    <property type="match status" value="1"/>
</dbReference>
<dbReference type="Pfam" id="PF02614">
    <property type="entry name" value="UxaC"/>
    <property type="match status" value="1"/>
</dbReference>
<dbReference type="SUPFAM" id="SSF51556">
    <property type="entry name" value="Metallo-dependent hydrolases"/>
    <property type="match status" value="1"/>
</dbReference>
<comment type="catalytic activity">
    <reaction evidence="1">
        <text>D-glucuronate = D-fructuronate</text>
        <dbReference type="Rhea" id="RHEA:13049"/>
        <dbReference type="ChEBI" id="CHEBI:58720"/>
        <dbReference type="ChEBI" id="CHEBI:59863"/>
        <dbReference type="EC" id="5.3.1.12"/>
    </reaction>
</comment>
<comment type="catalytic activity">
    <reaction evidence="1">
        <text>aldehydo-D-galacturonate = keto-D-tagaturonate</text>
        <dbReference type="Rhea" id="RHEA:27702"/>
        <dbReference type="ChEBI" id="CHEBI:12952"/>
        <dbReference type="ChEBI" id="CHEBI:17886"/>
        <dbReference type="EC" id="5.3.1.12"/>
    </reaction>
</comment>
<comment type="pathway">
    <text evidence="1">Carbohydrate metabolism; pentose and glucuronate interconversion.</text>
</comment>
<comment type="similarity">
    <text evidence="1">Belongs to the metallo-dependent hydrolases superfamily. Uronate isomerase family.</text>
</comment>
<name>UXAC_SALPK</name>
<keyword id="KW-0413">Isomerase</keyword>